<name>UNG_COXB2</name>
<sequence>MTTMAETQTWQTVLGEEKQEPYFQEILDFVKKERKAGKIIYPPQKDIFNALKLTPYEAVKVVILGQDPYHGPNQAHGLAFSVRPGVPAPPSLQNIFKELHADLGVSIPSHGFLEKWAKQGVLLLNAALTVEAGKPQSHANIEWHRFTDKVIESLNDHPEGIVFLLWGSYAQKKSQLITNLRHRILKAPHPSPLSAARGFLGCRHFSKANQLLHEMGRGEIDWALDEKVS</sequence>
<reference key="1">
    <citation type="journal article" date="2009" name="Infect. Immun.">
        <title>Comparative genomics reveal extensive transposon-mediated genomic plasticity and diversity among potential effector proteins within the genus Coxiella.</title>
        <authorList>
            <person name="Beare P.A."/>
            <person name="Unsworth N."/>
            <person name="Andoh M."/>
            <person name="Voth D.E."/>
            <person name="Omsland A."/>
            <person name="Gilk S.D."/>
            <person name="Williams K.P."/>
            <person name="Sobral B.W."/>
            <person name="Kupko J.J. III"/>
            <person name="Porcella S.F."/>
            <person name="Samuel J.E."/>
            <person name="Heinzen R.A."/>
        </authorList>
    </citation>
    <scope>NUCLEOTIDE SEQUENCE [LARGE SCALE GENOMIC DNA]</scope>
    <source>
        <strain>CbuG_Q212</strain>
    </source>
</reference>
<evidence type="ECO:0000255" key="1">
    <source>
        <dbReference type="HAMAP-Rule" id="MF_00148"/>
    </source>
</evidence>
<accession>B6J089</accession>
<gene>
    <name evidence="1" type="primary">ung</name>
    <name type="ordered locus">CbuG_1017</name>
</gene>
<keyword id="KW-0963">Cytoplasm</keyword>
<keyword id="KW-0227">DNA damage</keyword>
<keyword id="KW-0234">DNA repair</keyword>
<keyword id="KW-0378">Hydrolase</keyword>
<organism>
    <name type="scientific">Coxiella burnetii (strain CbuG_Q212)</name>
    <name type="common">Coxiella burnetii (strain Q212)</name>
    <dbReference type="NCBI Taxonomy" id="434923"/>
    <lineage>
        <taxon>Bacteria</taxon>
        <taxon>Pseudomonadati</taxon>
        <taxon>Pseudomonadota</taxon>
        <taxon>Gammaproteobacteria</taxon>
        <taxon>Legionellales</taxon>
        <taxon>Coxiellaceae</taxon>
        <taxon>Coxiella</taxon>
    </lineage>
</organism>
<feature type="chain" id="PRO_1000096575" description="Uracil-DNA glycosylase">
    <location>
        <begin position="1"/>
        <end position="229"/>
    </location>
</feature>
<feature type="active site" description="Proton acceptor" evidence="1">
    <location>
        <position position="67"/>
    </location>
</feature>
<dbReference type="EC" id="3.2.2.27" evidence="1"/>
<dbReference type="EMBL" id="CP001019">
    <property type="protein sequence ID" value="ACJ18367.1"/>
    <property type="molecule type" value="Genomic_DNA"/>
</dbReference>
<dbReference type="RefSeq" id="WP_012570038.1">
    <property type="nucleotide sequence ID" value="NC_011527.1"/>
</dbReference>
<dbReference type="SMR" id="B6J089"/>
<dbReference type="KEGG" id="cbg:CbuG_1017"/>
<dbReference type="HOGENOM" id="CLU_032162_3_0_6"/>
<dbReference type="GO" id="GO:0005737">
    <property type="term" value="C:cytoplasm"/>
    <property type="evidence" value="ECO:0007669"/>
    <property type="project" value="UniProtKB-SubCell"/>
</dbReference>
<dbReference type="GO" id="GO:0004844">
    <property type="term" value="F:uracil DNA N-glycosylase activity"/>
    <property type="evidence" value="ECO:0007669"/>
    <property type="project" value="UniProtKB-UniRule"/>
</dbReference>
<dbReference type="GO" id="GO:0097510">
    <property type="term" value="P:base-excision repair, AP site formation via deaminated base removal"/>
    <property type="evidence" value="ECO:0007669"/>
    <property type="project" value="TreeGrafter"/>
</dbReference>
<dbReference type="CDD" id="cd10027">
    <property type="entry name" value="UDG-F1-like"/>
    <property type="match status" value="1"/>
</dbReference>
<dbReference type="FunFam" id="3.40.470.10:FF:000001">
    <property type="entry name" value="Uracil-DNA glycosylase"/>
    <property type="match status" value="1"/>
</dbReference>
<dbReference type="Gene3D" id="3.40.470.10">
    <property type="entry name" value="Uracil-DNA glycosylase-like domain"/>
    <property type="match status" value="1"/>
</dbReference>
<dbReference type="HAMAP" id="MF_00148">
    <property type="entry name" value="UDG"/>
    <property type="match status" value="1"/>
</dbReference>
<dbReference type="InterPro" id="IPR002043">
    <property type="entry name" value="UDG_fam1"/>
</dbReference>
<dbReference type="InterPro" id="IPR018085">
    <property type="entry name" value="Ura-DNA_Glyclase_AS"/>
</dbReference>
<dbReference type="InterPro" id="IPR005122">
    <property type="entry name" value="Uracil-DNA_glycosylase-like"/>
</dbReference>
<dbReference type="InterPro" id="IPR036895">
    <property type="entry name" value="Uracil-DNA_glycosylase-like_sf"/>
</dbReference>
<dbReference type="NCBIfam" id="NF003588">
    <property type="entry name" value="PRK05254.1-1"/>
    <property type="match status" value="1"/>
</dbReference>
<dbReference type="NCBIfam" id="NF003589">
    <property type="entry name" value="PRK05254.1-2"/>
    <property type="match status" value="1"/>
</dbReference>
<dbReference type="NCBIfam" id="NF003591">
    <property type="entry name" value="PRK05254.1-4"/>
    <property type="match status" value="1"/>
</dbReference>
<dbReference type="NCBIfam" id="NF003592">
    <property type="entry name" value="PRK05254.1-5"/>
    <property type="match status" value="1"/>
</dbReference>
<dbReference type="NCBIfam" id="TIGR00628">
    <property type="entry name" value="ung"/>
    <property type="match status" value="1"/>
</dbReference>
<dbReference type="PANTHER" id="PTHR11264">
    <property type="entry name" value="URACIL-DNA GLYCOSYLASE"/>
    <property type="match status" value="1"/>
</dbReference>
<dbReference type="PANTHER" id="PTHR11264:SF0">
    <property type="entry name" value="URACIL-DNA GLYCOSYLASE"/>
    <property type="match status" value="1"/>
</dbReference>
<dbReference type="Pfam" id="PF03167">
    <property type="entry name" value="UDG"/>
    <property type="match status" value="1"/>
</dbReference>
<dbReference type="SMART" id="SM00986">
    <property type="entry name" value="UDG"/>
    <property type="match status" value="1"/>
</dbReference>
<dbReference type="SMART" id="SM00987">
    <property type="entry name" value="UreE_C"/>
    <property type="match status" value="1"/>
</dbReference>
<dbReference type="SUPFAM" id="SSF52141">
    <property type="entry name" value="Uracil-DNA glycosylase-like"/>
    <property type="match status" value="1"/>
</dbReference>
<dbReference type="PROSITE" id="PS00130">
    <property type="entry name" value="U_DNA_GLYCOSYLASE"/>
    <property type="match status" value="1"/>
</dbReference>
<protein>
    <recommendedName>
        <fullName evidence="1">Uracil-DNA glycosylase</fullName>
        <shortName evidence="1">UDG</shortName>
        <ecNumber evidence="1">3.2.2.27</ecNumber>
    </recommendedName>
</protein>
<comment type="function">
    <text evidence="1">Excises uracil residues from the DNA which can arise as a result of misincorporation of dUMP residues by DNA polymerase or due to deamination of cytosine.</text>
</comment>
<comment type="catalytic activity">
    <reaction evidence="1">
        <text>Hydrolyzes single-stranded DNA or mismatched double-stranded DNA and polynucleotides, releasing free uracil.</text>
        <dbReference type="EC" id="3.2.2.27"/>
    </reaction>
</comment>
<comment type="subcellular location">
    <subcellularLocation>
        <location evidence="1">Cytoplasm</location>
    </subcellularLocation>
</comment>
<comment type="similarity">
    <text evidence="1">Belongs to the uracil-DNA glycosylase (UDG) superfamily. UNG family.</text>
</comment>
<proteinExistence type="inferred from homology"/>